<protein>
    <recommendedName>
        <fullName evidence="1">UPF0225 protein RSc0270</fullName>
    </recommendedName>
</protein>
<name>Y270_RALN1</name>
<feature type="chain" id="PRO_0000071812" description="UPF0225 protein RSc0270">
    <location>
        <begin position="1"/>
        <end position="144"/>
    </location>
</feature>
<sequence>MTRALPAPAPTAACPCGAGAYGRCCGPFHAGDAVPATAEQLMRSRYSAYVLHDTAYLRRTWHPSTCPTDLERGEADAPATRWLGLDVKRHTQQDPTHATVEFVARYKVGGRAHRLHETSRFVRLDAGGAESPQGRWLYVDGDLT</sequence>
<comment type="similarity">
    <text evidence="1">Belongs to the UPF0225 family.</text>
</comment>
<keyword id="KW-1185">Reference proteome</keyword>
<evidence type="ECO:0000255" key="1">
    <source>
        <dbReference type="HAMAP-Rule" id="MF_00612"/>
    </source>
</evidence>
<gene>
    <name type="ordered locus">RSc0270</name>
    <name type="ORF">RS03237</name>
</gene>
<reference key="1">
    <citation type="journal article" date="2002" name="Nature">
        <title>Genome sequence of the plant pathogen Ralstonia solanacearum.</title>
        <authorList>
            <person name="Salanoubat M."/>
            <person name="Genin S."/>
            <person name="Artiguenave F."/>
            <person name="Gouzy J."/>
            <person name="Mangenot S."/>
            <person name="Arlat M."/>
            <person name="Billault A."/>
            <person name="Brottier P."/>
            <person name="Camus J.-C."/>
            <person name="Cattolico L."/>
            <person name="Chandler M."/>
            <person name="Choisne N."/>
            <person name="Claudel-Renard C."/>
            <person name="Cunnac S."/>
            <person name="Demange N."/>
            <person name="Gaspin C."/>
            <person name="Lavie M."/>
            <person name="Moisan A."/>
            <person name="Robert C."/>
            <person name="Saurin W."/>
            <person name="Schiex T."/>
            <person name="Siguier P."/>
            <person name="Thebault P."/>
            <person name="Whalen M."/>
            <person name="Wincker P."/>
            <person name="Levy M."/>
            <person name="Weissenbach J."/>
            <person name="Boucher C.A."/>
        </authorList>
    </citation>
    <scope>NUCLEOTIDE SEQUENCE [LARGE SCALE GENOMIC DNA]</scope>
    <source>
        <strain>ATCC BAA-1114 / GMI1000</strain>
    </source>
</reference>
<organism>
    <name type="scientific">Ralstonia nicotianae (strain ATCC BAA-1114 / GMI1000)</name>
    <name type="common">Ralstonia solanacearum</name>
    <dbReference type="NCBI Taxonomy" id="267608"/>
    <lineage>
        <taxon>Bacteria</taxon>
        <taxon>Pseudomonadati</taxon>
        <taxon>Pseudomonadota</taxon>
        <taxon>Betaproteobacteria</taxon>
        <taxon>Burkholderiales</taxon>
        <taxon>Burkholderiaceae</taxon>
        <taxon>Ralstonia</taxon>
        <taxon>Ralstonia solanacearum species complex</taxon>
    </lineage>
</organism>
<proteinExistence type="inferred from homology"/>
<dbReference type="EMBL" id="AL646052">
    <property type="protein sequence ID" value="CAD13798.1"/>
    <property type="molecule type" value="Genomic_DNA"/>
</dbReference>
<dbReference type="RefSeq" id="WP_011000237.1">
    <property type="nucleotide sequence ID" value="NC_003295.1"/>
</dbReference>
<dbReference type="SMR" id="Q8Y2R5"/>
<dbReference type="STRING" id="267608.RSc0270"/>
<dbReference type="EnsemblBacteria" id="CAD13798">
    <property type="protein sequence ID" value="CAD13798"/>
    <property type="gene ID" value="RSc0270"/>
</dbReference>
<dbReference type="KEGG" id="rso:RSc0270"/>
<dbReference type="PATRIC" id="fig|267608.8.peg.275"/>
<dbReference type="eggNOG" id="COG3012">
    <property type="taxonomic scope" value="Bacteria"/>
</dbReference>
<dbReference type="HOGENOM" id="CLU_099590_2_0_4"/>
<dbReference type="Proteomes" id="UP000001436">
    <property type="component" value="Chromosome"/>
</dbReference>
<dbReference type="Gene3D" id="3.10.450.50">
    <property type="match status" value="1"/>
</dbReference>
<dbReference type="HAMAP" id="MF_00612">
    <property type="entry name" value="UPF0225"/>
    <property type="match status" value="1"/>
</dbReference>
<dbReference type="InterPro" id="IPR032710">
    <property type="entry name" value="NTF2-like_dom_sf"/>
</dbReference>
<dbReference type="InterPro" id="IPR023006">
    <property type="entry name" value="UPF0225"/>
</dbReference>
<dbReference type="InterPro" id="IPR048469">
    <property type="entry name" value="YchJ-like_M"/>
</dbReference>
<dbReference type="NCBIfam" id="NF002502">
    <property type="entry name" value="PRK01842.1"/>
    <property type="match status" value="1"/>
</dbReference>
<dbReference type="PANTHER" id="PTHR33747:SF1">
    <property type="entry name" value="ADENYLATE CYCLASE-ASSOCIATED CAP C-TERMINAL DOMAIN-CONTAINING PROTEIN"/>
    <property type="match status" value="1"/>
</dbReference>
<dbReference type="PANTHER" id="PTHR33747">
    <property type="entry name" value="UPF0225 PROTEIN SCO1677"/>
    <property type="match status" value="1"/>
</dbReference>
<dbReference type="Pfam" id="PF17775">
    <property type="entry name" value="YchJ_M-like"/>
    <property type="match status" value="1"/>
</dbReference>
<dbReference type="SUPFAM" id="SSF54427">
    <property type="entry name" value="NTF2-like"/>
    <property type="match status" value="1"/>
</dbReference>
<accession>Q8Y2R5</accession>